<keyword id="KW-0472">Membrane</keyword>
<keyword id="KW-0602">Photosynthesis</keyword>
<keyword id="KW-0604">Photosystem II</keyword>
<keyword id="KW-1185">Reference proteome</keyword>
<keyword id="KW-0793">Thylakoid</keyword>
<keyword id="KW-0812">Transmembrane</keyword>
<keyword id="KW-1133">Transmembrane helix</keyword>
<dbReference type="EMBL" id="CT971583">
    <property type="protein sequence ID" value="CAK22739.1"/>
    <property type="molecule type" value="Genomic_DNA"/>
</dbReference>
<dbReference type="SMR" id="A5GIH4"/>
<dbReference type="STRING" id="32051.SynWH7803_0313"/>
<dbReference type="KEGG" id="syx:SynWH7803_0313"/>
<dbReference type="eggNOG" id="ENOG50332MV">
    <property type="taxonomic scope" value="Bacteria"/>
</dbReference>
<dbReference type="HOGENOM" id="CLU_190203_0_0_3"/>
<dbReference type="OrthoDB" id="427121at2"/>
<dbReference type="Proteomes" id="UP000001566">
    <property type="component" value="Chromosome"/>
</dbReference>
<dbReference type="GO" id="GO:0009523">
    <property type="term" value="C:photosystem II"/>
    <property type="evidence" value="ECO:0007669"/>
    <property type="project" value="UniProtKB-KW"/>
</dbReference>
<dbReference type="GO" id="GO:0031676">
    <property type="term" value="C:plasma membrane-derived thylakoid membrane"/>
    <property type="evidence" value="ECO:0007669"/>
    <property type="project" value="UniProtKB-SubCell"/>
</dbReference>
<dbReference type="GO" id="GO:0042301">
    <property type="term" value="F:phosphate ion binding"/>
    <property type="evidence" value="ECO:0007669"/>
    <property type="project" value="InterPro"/>
</dbReference>
<dbReference type="GO" id="GO:0015979">
    <property type="term" value="P:photosynthesis"/>
    <property type="evidence" value="ECO:0007669"/>
    <property type="project" value="UniProtKB-UniRule"/>
</dbReference>
<dbReference type="GO" id="GO:0050821">
    <property type="term" value="P:protein stabilization"/>
    <property type="evidence" value="ECO:0007669"/>
    <property type="project" value="InterPro"/>
</dbReference>
<dbReference type="Gene3D" id="1.20.5.880">
    <property type="entry name" value="Photosystem II reaction center protein H"/>
    <property type="match status" value="1"/>
</dbReference>
<dbReference type="HAMAP" id="MF_00752">
    <property type="entry name" value="PSII_PsbH"/>
    <property type="match status" value="1"/>
</dbReference>
<dbReference type="InterPro" id="IPR001056">
    <property type="entry name" value="PSII_PsbH"/>
</dbReference>
<dbReference type="InterPro" id="IPR036863">
    <property type="entry name" value="PSII_PsbH_sf"/>
</dbReference>
<dbReference type="NCBIfam" id="NF002728">
    <property type="entry name" value="PRK02624.1"/>
    <property type="match status" value="1"/>
</dbReference>
<dbReference type="PANTHER" id="PTHR34469">
    <property type="entry name" value="PHOTOSYSTEM II REACTION CENTER PROTEIN H"/>
    <property type="match status" value="1"/>
</dbReference>
<dbReference type="PANTHER" id="PTHR34469:SF4">
    <property type="entry name" value="PHOTOSYSTEM II REACTION CENTER PROTEIN H"/>
    <property type="match status" value="1"/>
</dbReference>
<dbReference type="Pfam" id="PF00737">
    <property type="entry name" value="PsbH"/>
    <property type="match status" value="1"/>
</dbReference>
<dbReference type="SUPFAM" id="SSF161025">
    <property type="entry name" value="Photosystem II 10 kDa phosphoprotein PsbH"/>
    <property type="match status" value="1"/>
</dbReference>
<accession>A5GIH4</accession>
<organism>
    <name type="scientific">Synechococcus sp. (strain WH7803)</name>
    <dbReference type="NCBI Taxonomy" id="32051"/>
    <lineage>
        <taxon>Bacteria</taxon>
        <taxon>Bacillati</taxon>
        <taxon>Cyanobacteriota</taxon>
        <taxon>Cyanophyceae</taxon>
        <taxon>Synechococcales</taxon>
        <taxon>Synechococcaceae</taxon>
        <taxon>Synechococcus</taxon>
    </lineage>
</organism>
<gene>
    <name evidence="1" type="primary">psbH</name>
    <name type="ordered locus">SynWH7803_0313</name>
</gene>
<evidence type="ECO:0000255" key="1">
    <source>
        <dbReference type="HAMAP-Rule" id="MF_00752"/>
    </source>
</evidence>
<sequence length="66" mass="7349">MAQRTRLGDLLRPLNSEYGKVVPGWGTTPVMGIFMVLFLVFLLVILQLYNQSLILEGINVNWNGAG</sequence>
<feature type="chain" id="PRO_1000046595" description="Photosystem II reaction center protein H">
    <location>
        <begin position="1"/>
        <end position="66"/>
    </location>
</feature>
<feature type="transmembrane region" description="Helical" evidence="1">
    <location>
        <begin position="29"/>
        <end position="49"/>
    </location>
</feature>
<proteinExistence type="inferred from homology"/>
<protein>
    <recommendedName>
        <fullName evidence="1">Photosystem II reaction center protein H</fullName>
        <shortName evidence="1">PSII-H</shortName>
    </recommendedName>
</protein>
<reference key="1">
    <citation type="submission" date="2006-05" db="EMBL/GenBank/DDBJ databases">
        <authorList>
            <consortium name="Genoscope"/>
        </authorList>
    </citation>
    <scope>NUCLEOTIDE SEQUENCE [LARGE SCALE GENOMIC DNA]</scope>
    <source>
        <strain>WH7803</strain>
    </source>
</reference>
<comment type="function">
    <text evidence="1">One of the components of the core complex of photosystem II (PSII), required for its stability and/or assembly. PSII is a light-driven water:plastoquinone oxidoreductase that uses light energy to abstract electrons from H(2)O, generating O(2) and a proton gradient subsequently used for ATP formation. It consists of a core antenna complex that captures photons, and an electron transfer chain that converts photonic excitation into a charge separation.</text>
</comment>
<comment type="subunit">
    <text evidence="1">PSII is composed of 1 copy each of membrane proteins PsbA, PsbB, PsbC, PsbD, PsbE, PsbF, PsbH, PsbI, PsbJ, PsbK, PsbL, PsbM, PsbT, PsbX, PsbY, PsbZ, Psb30/Ycf12, peripheral proteins PsbO, CyanoQ (PsbQ), PsbU, PsbV and a large number of cofactors. It forms dimeric complexes.</text>
</comment>
<comment type="subcellular location">
    <subcellularLocation>
        <location evidence="1">Cellular thylakoid membrane</location>
        <topology evidence="1">Single-pass membrane protein</topology>
    </subcellularLocation>
</comment>
<comment type="similarity">
    <text evidence="1">Belongs to the PsbH family.</text>
</comment>
<name>PSBH_SYNPW</name>